<proteinExistence type="inferred from homology"/>
<keyword id="KW-1185">Reference proteome</keyword>
<keyword id="KW-0687">Ribonucleoprotein</keyword>
<keyword id="KW-0689">Ribosomal protein</keyword>
<organism>
    <name type="scientific">Frankia casuarinae (strain DSM 45818 / CECT 9043 / HFP020203 / CcI3)</name>
    <dbReference type="NCBI Taxonomy" id="106370"/>
    <lineage>
        <taxon>Bacteria</taxon>
        <taxon>Bacillati</taxon>
        <taxon>Actinomycetota</taxon>
        <taxon>Actinomycetes</taxon>
        <taxon>Frankiales</taxon>
        <taxon>Frankiaceae</taxon>
        <taxon>Frankia</taxon>
    </lineage>
</organism>
<gene>
    <name evidence="1" type="primary">rpmG</name>
    <name type="ordered locus">Francci3_0563</name>
</gene>
<accession>Q2JFJ5</accession>
<evidence type="ECO:0000255" key="1">
    <source>
        <dbReference type="HAMAP-Rule" id="MF_00294"/>
    </source>
</evidence>
<evidence type="ECO:0000305" key="2"/>
<protein>
    <recommendedName>
        <fullName evidence="1">Large ribosomal subunit protein bL33</fullName>
    </recommendedName>
    <alternativeName>
        <fullName evidence="2">50S ribosomal protein L33</fullName>
    </alternativeName>
</protein>
<comment type="similarity">
    <text evidence="1">Belongs to the bacterial ribosomal protein bL33 family.</text>
</comment>
<feature type="chain" id="PRO_1000004169" description="Large ribosomal subunit protein bL33">
    <location>
        <begin position="1"/>
        <end position="54"/>
    </location>
</feature>
<sequence length="54" mass="6469">MAATDVRPKITMACQVCKHRNYITRKNRRNDPDRLELKKFCPNCGKHTEHRETR</sequence>
<reference key="1">
    <citation type="journal article" date="2007" name="Genome Res.">
        <title>Genome characteristics of facultatively symbiotic Frankia sp. strains reflect host range and host plant biogeography.</title>
        <authorList>
            <person name="Normand P."/>
            <person name="Lapierre P."/>
            <person name="Tisa L.S."/>
            <person name="Gogarten J.P."/>
            <person name="Alloisio N."/>
            <person name="Bagnarol E."/>
            <person name="Bassi C.A."/>
            <person name="Berry A.M."/>
            <person name="Bickhart D.M."/>
            <person name="Choisne N."/>
            <person name="Couloux A."/>
            <person name="Cournoyer B."/>
            <person name="Cruveiller S."/>
            <person name="Daubin V."/>
            <person name="Demange N."/>
            <person name="Francino M.P."/>
            <person name="Goltsman E."/>
            <person name="Huang Y."/>
            <person name="Kopp O.R."/>
            <person name="Labarre L."/>
            <person name="Lapidus A."/>
            <person name="Lavire C."/>
            <person name="Marechal J."/>
            <person name="Martinez M."/>
            <person name="Mastronunzio J.E."/>
            <person name="Mullin B.C."/>
            <person name="Niemann J."/>
            <person name="Pujic P."/>
            <person name="Rawnsley T."/>
            <person name="Rouy Z."/>
            <person name="Schenowitz C."/>
            <person name="Sellstedt A."/>
            <person name="Tavares F."/>
            <person name="Tomkins J.P."/>
            <person name="Vallenet D."/>
            <person name="Valverde C."/>
            <person name="Wall L.G."/>
            <person name="Wang Y."/>
            <person name="Medigue C."/>
            <person name="Benson D.R."/>
        </authorList>
    </citation>
    <scope>NUCLEOTIDE SEQUENCE [LARGE SCALE GENOMIC DNA]</scope>
    <source>
        <strain>DSM 45818 / CECT 9043 / HFP020203 / CcI3</strain>
    </source>
</reference>
<dbReference type="EMBL" id="CP000249">
    <property type="protein sequence ID" value="ABD09947.1"/>
    <property type="molecule type" value="Genomic_DNA"/>
</dbReference>
<dbReference type="RefSeq" id="WP_009740545.1">
    <property type="nucleotide sequence ID" value="NZ_JENI01000032.1"/>
</dbReference>
<dbReference type="SMR" id="Q2JFJ5"/>
<dbReference type="STRING" id="106370.Francci3_0563"/>
<dbReference type="KEGG" id="fra:Francci3_0563"/>
<dbReference type="eggNOG" id="COG0267">
    <property type="taxonomic scope" value="Bacteria"/>
</dbReference>
<dbReference type="HOGENOM" id="CLU_190949_0_2_11"/>
<dbReference type="OrthoDB" id="21586at2"/>
<dbReference type="PhylomeDB" id="Q2JFJ5"/>
<dbReference type="Proteomes" id="UP000001937">
    <property type="component" value="Chromosome"/>
</dbReference>
<dbReference type="GO" id="GO:0005737">
    <property type="term" value="C:cytoplasm"/>
    <property type="evidence" value="ECO:0007669"/>
    <property type="project" value="UniProtKB-ARBA"/>
</dbReference>
<dbReference type="GO" id="GO:1990904">
    <property type="term" value="C:ribonucleoprotein complex"/>
    <property type="evidence" value="ECO:0007669"/>
    <property type="project" value="UniProtKB-KW"/>
</dbReference>
<dbReference type="GO" id="GO:0005840">
    <property type="term" value="C:ribosome"/>
    <property type="evidence" value="ECO:0007669"/>
    <property type="project" value="UniProtKB-KW"/>
</dbReference>
<dbReference type="GO" id="GO:0003735">
    <property type="term" value="F:structural constituent of ribosome"/>
    <property type="evidence" value="ECO:0007669"/>
    <property type="project" value="InterPro"/>
</dbReference>
<dbReference type="GO" id="GO:0006412">
    <property type="term" value="P:translation"/>
    <property type="evidence" value="ECO:0007669"/>
    <property type="project" value="UniProtKB-UniRule"/>
</dbReference>
<dbReference type="Gene3D" id="2.20.28.120">
    <property type="entry name" value="Ribosomal protein L33"/>
    <property type="match status" value="1"/>
</dbReference>
<dbReference type="HAMAP" id="MF_00294">
    <property type="entry name" value="Ribosomal_bL33"/>
    <property type="match status" value="1"/>
</dbReference>
<dbReference type="InterPro" id="IPR001705">
    <property type="entry name" value="Ribosomal_bL33"/>
</dbReference>
<dbReference type="InterPro" id="IPR018264">
    <property type="entry name" value="Ribosomal_bL33_CS"/>
</dbReference>
<dbReference type="InterPro" id="IPR038584">
    <property type="entry name" value="Ribosomal_bL33_sf"/>
</dbReference>
<dbReference type="InterPro" id="IPR011332">
    <property type="entry name" value="Ribosomal_zn-bd"/>
</dbReference>
<dbReference type="NCBIfam" id="NF001764">
    <property type="entry name" value="PRK00504.1"/>
    <property type="match status" value="1"/>
</dbReference>
<dbReference type="NCBIfam" id="NF001860">
    <property type="entry name" value="PRK00595.1"/>
    <property type="match status" value="1"/>
</dbReference>
<dbReference type="NCBIfam" id="TIGR01023">
    <property type="entry name" value="rpmG_bact"/>
    <property type="match status" value="1"/>
</dbReference>
<dbReference type="PANTHER" id="PTHR43168">
    <property type="entry name" value="50S RIBOSOMAL PROTEIN L33, CHLOROPLASTIC"/>
    <property type="match status" value="1"/>
</dbReference>
<dbReference type="PANTHER" id="PTHR43168:SF2">
    <property type="entry name" value="LARGE RIBOSOMAL SUBUNIT PROTEIN BL33C"/>
    <property type="match status" value="1"/>
</dbReference>
<dbReference type="Pfam" id="PF00471">
    <property type="entry name" value="Ribosomal_L33"/>
    <property type="match status" value="1"/>
</dbReference>
<dbReference type="SUPFAM" id="SSF57829">
    <property type="entry name" value="Zn-binding ribosomal proteins"/>
    <property type="match status" value="1"/>
</dbReference>
<dbReference type="PROSITE" id="PS00582">
    <property type="entry name" value="RIBOSOMAL_L33"/>
    <property type="match status" value="1"/>
</dbReference>
<name>RL33_FRACC</name>